<dbReference type="EC" id="2.5.1.61" evidence="1"/>
<dbReference type="EMBL" id="CP000682">
    <property type="protein sequence ID" value="ABP94394.1"/>
    <property type="molecule type" value="Genomic_DNA"/>
</dbReference>
<dbReference type="RefSeq" id="WP_011921362.1">
    <property type="nucleotide sequence ID" value="NC_009440.1"/>
</dbReference>
<dbReference type="SMR" id="A4YD92"/>
<dbReference type="STRING" id="399549.Msed_0217"/>
<dbReference type="GeneID" id="91754661"/>
<dbReference type="KEGG" id="mse:Msed_0217"/>
<dbReference type="eggNOG" id="arCOG04299">
    <property type="taxonomic scope" value="Archaea"/>
</dbReference>
<dbReference type="HOGENOM" id="CLU_019704_1_0_2"/>
<dbReference type="UniPathway" id="UPA00251">
    <property type="reaction ID" value="UER00319"/>
</dbReference>
<dbReference type="Proteomes" id="UP000000242">
    <property type="component" value="Chromosome"/>
</dbReference>
<dbReference type="GO" id="GO:0005737">
    <property type="term" value="C:cytoplasm"/>
    <property type="evidence" value="ECO:0007669"/>
    <property type="project" value="TreeGrafter"/>
</dbReference>
<dbReference type="GO" id="GO:0004418">
    <property type="term" value="F:hydroxymethylbilane synthase activity"/>
    <property type="evidence" value="ECO:0007669"/>
    <property type="project" value="UniProtKB-UniRule"/>
</dbReference>
<dbReference type="GO" id="GO:0006782">
    <property type="term" value="P:protoporphyrinogen IX biosynthetic process"/>
    <property type="evidence" value="ECO:0007669"/>
    <property type="project" value="UniProtKB-UniRule"/>
</dbReference>
<dbReference type="FunFam" id="3.40.190.10:FF:000005">
    <property type="entry name" value="Porphobilinogen deaminase"/>
    <property type="match status" value="1"/>
</dbReference>
<dbReference type="Gene3D" id="3.40.190.10">
    <property type="entry name" value="Periplasmic binding protein-like II"/>
    <property type="match status" value="2"/>
</dbReference>
<dbReference type="Gene3D" id="3.30.160.40">
    <property type="entry name" value="Porphobilinogen deaminase, C-terminal domain"/>
    <property type="match status" value="1"/>
</dbReference>
<dbReference type="HAMAP" id="MF_00260">
    <property type="entry name" value="Porphobil_deam"/>
    <property type="match status" value="1"/>
</dbReference>
<dbReference type="InterPro" id="IPR000860">
    <property type="entry name" value="HemC"/>
</dbReference>
<dbReference type="InterPro" id="IPR022419">
    <property type="entry name" value="Porphobilin_deaminase_cofac_BS"/>
</dbReference>
<dbReference type="InterPro" id="IPR022417">
    <property type="entry name" value="Porphobilin_deaminase_N"/>
</dbReference>
<dbReference type="InterPro" id="IPR036803">
    <property type="entry name" value="Porphobilinogen_deaminase_C_sf"/>
</dbReference>
<dbReference type="NCBIfam" id="TIGR00212">
    <property type="entry name" value="hemC"/>
    <property type="match status" value="1"/>
</dbReference>
<dbReference type="PANTHER" id="PTHR11557">
    <property type="entry name" value="PORPHOBILINOGEN DEAMINASE"/>
    <property type="match status" value="1"/>
</dbReference>
<dbReference type="PANTHER" id="PTHR11557:SF0">
    <property type="entry name" value="PORPHOBILINOGEN DEAMINASE"/>
    <property type="match status" value="1"/>
</dbReference>
<dbReference type="Pfam" id="PF01379">
    <property type="entry name" value="Porphobil_deam"/>
    <property type="match status" value="1"/>
</dbReference>
<dbReference type="PIRSF" id="PIRSF001438">
    <property type="entry name" value="4pyrrol_synth_OHMeBilane_synth"/>
    <property type="match status" value="1"/>
</dbReference>
<dbReference type="PRINTS" id="PR00151">
    <property type="entry name" value="PORPHBDMNASE"/>
</dbReference>
<dbReference type="SUPFAM" id="SSF53850">
    <property type="entry name" value="Periplasmic binding protein-like II"/>
    <property type="match status" value="1"/>
</dbReference>
<dbReference type="SUPFAM" id="SSF54782">
    <property type="entry name" value="Porphobilinogen deaminase (hydroxymethylbilane synthase), C-terminal domain"/>
    <property type="match status" value="1"/>
</dbReference>
<dbReference type="PROSITE" id="PS00533">
    <property type="entry name" value="PORPHOBILINOGEN_DEAM"/>
    <property type="match status" value="1"/>
</dbReference>
<gene>
    <name evidence="1" type="primary">hemC</name>
    <name type="ordered locus">Msed_0217</name>
</gene>
<organism>
    <name type="scientific">Metallosphaera sedula (strain ATCC 51363 / DSM 5348 / JCM 9185 / NBRC 15509 / TH2)</name>
    <dbReference type="NCBI Taxonomy" id="399549"/>
    <lineage>
        <taxon>Archaea</taxon>
        <taxon>Thermoproteota</taxon>
        <taxon>Thermoprotei</taxon>
        <taxon>Sulfolobales</taxon>
        <taxon>Sulfolobaceae</taxon>
        <taxon>Metallosphaera</taxon>
    </lineage>
</organism>
<name>HEM3_METS5</name>
<evidence type="ECO:0000255" key="1">
    <source>
        <dbReference type="HAMAP-Rule" id="MF_00260"/>
    </source>
</evidence>
<comment type="function">
    <text evidence="1">Tetrapolymerization of the monopyrrole PBG into the hydroxymethylbilane pre-uroporphyrinogen in several discrete steps.</text>
</comment>
<comment type="catalytic activity">
    <reaction evidence="1">
        <text>4 porphobilinogen + H2O = hydroxymethylbilane + 4 NH4(+)</text>
        <dbReference type="Rhea" id="RHEA:13185"/>
        <dbReference type="ChEBI" id="CHEBI:15377"/>
        <dbReference type="ChEBI" id="CHEBI:28938"/>
        <dbReference type="ChEBI" id="CHEBI:57845"/>
        <dbReference type="ChEBI" id="CHEBI:58126"/>
        <dbReference type="EC" id="2.5.1.61"/>
    </reaction>
</comment>
<comment type="cofactor">
    <cofactor evidence="1">
        <name>dipyrromethane</name>
        <dbReference type="ChEBI" id="CHEBI:60342"/>
    </cofactor>
    <text evidence="1">Binds 1 dipyrromethane group covalently.</text>
</comment>
<comment type="pathway">
    <text evidence="1">Porphyrin-containing compound metabolism; protoporphyrin-IX biosynthesis; coproporphyrinogen-III from 5-aminolevulinate: step 2/4.</text>
</comment>
<comment type="miscellaneous">
    <text evidence="1">The porphobilinogen subunits are added to the dipyrromethane group.</text>
</comment>
<comment type="similarity">
    <text evidence="1">Belongs to the HMBS family.</text>
</comment>
<protein>
    <recommendedName>
        <fullName evidence="1">Probable porphobilinogen deaminase</fullName>
        <shortName evidence="1">PBG</shortName>
        <ecNumber evidence="1">2.5.1.61</ecNumber>
    </recommendedName>
    <alternativeName>
        <fullName evidence="1">Hydroxymethylbilane synthase</fullName>
        <shortName evidence="1">HMBS</shortName>
    </alternativeName>
    <alternativeName>
        <fullName evidence="1">Pre-uroporphyrinogen synthase</fullName>
    </alternativeName>
</protein>
<proteinExistence type="inferred from homology"/>
<keyword id="KW-0627">Porphyrin biosynthesis</keyword>
<keyword id="KW-1185">Reference proteome</keyword>
<keyword id="KW-0808">Transferase</keyword>
<accession>A4YD92</accession>
<feature type="chain" id="PRO_1000078611" description="Probable porphobilinogen deaminase">
    <location>
        <begin position="1"/>
        <end position="290"/>
    </location>
</feature>
<feature type="modified residue" description="S-(dipyrrolylmethanemethyl)cysteine" evidence="1">
    <location>
        <position position="230"/>
    </location>
</feature>
<sequence>MKIRIAARGSKLSLKQVEIVTTYLQAKGYETEFIEIKTKADLFGNKPLHEIGKGVFEKEVNEAVLQGRADIAVHSMKDMSSELPPGLELLATPKRENPVDVLVSELNLEELPEKSRIGTGSLRRANFLKVVRPDLVVENIRGNVDTRLRKYRDHEYDGIILAEAGLRRLGVEVKRFPLDVESFTPEPNQGIIAVVGSPKFLGLFQELNDTGTMKEALAEKETVKVVGGGCHSPLGVLFRLEDDVLHGIASYSNGVKRVTVKLSTRESPQIAGNQLGKALVKAMKDEGLIP</sequence>
<reference key="1">
    <citation type="journal article" date="2008" name="Appl. Environ. Microbiol.">
        <title>The genome sequence of the metal-mobilizing, extremely thermoacidophilic archaeon Metallosphaera sedula provides insights into bioleaching-associated metabolism.</title>
        <authorList>
            <person name="Auernik K.S."/>
            <person name="Maezato Y."/>
            <person name="Blum P.H."/>
            <person name="Kelly R.M."/>
        </authorList>
    </citation>
    <scope>NUCLEOTIDE SEQUENCE [LARGE SCALE GENOMIC DNA]</scope>
    <source>
        <strain>ATCC 51363 / DSM 5348 / JCM 9185 / NBRC 15509 / TH2</strain>
    </source>
</reference>